<sequence length="80" mass="8724">MKLTCVLIIAMLFLIVCQLNTADDSTDKQEYRAVKLRDAMRNFKGSKRNCGEQGEGCATRPCCAGLSCVGSRPGGLCQYD</sequence>
<accession>Q9BP85</accession>
<keyword id="KW-0165">Cleavage on pair of basic residues</keyword>
<keyword id="KW-1015">Disulfide bond</keyword>
<keyword id="KW-0960">Knottin</keyword>
<keyword id="KW-0528">Neurotoxin</keyword>
<keyword id="KW-0964">Secreted</keyword>
<keyword id="KW-0732">Signal</keyword>
<keyword id="KW-0800">Toxin</keyword>
<protein>
    <recommendedName>
        <fullName>Conotoxin ArMKLT2-0321</fullName>
    </recommendedName>
</protein>
<reference key="1">
    <citation type="journal article" date="2001" name="Mol. Biol. Evol.">
        <title>Mechanisms for evolving hypervariability: the case of conopeptides.</title>
        <authorList>
            <person name="Conticello S.G."/>
            <person name="Gilad Y."/>
            <person name="Avidan N."/>
            <person name="Ben-Asher E."/>
            <person name="Levy Z."/>
            <person name="Fainzilber M."/>
        </authorList>
    </citation>
    <scope>NUCLEOTIDE SEQUENCE [MRNA]</scope>
    <source>
        <tissue>Venom duct</tissue>
    </source>
</reference>
<evidence type="ECO:0000250" key="1"/>
<evidence type="ECO:0000255" key="2"/>
<evidence type="ECO:0000305" key="3"/>
<feature type="signal peptide" evidence="2">
    <location>
        <begin position="1"/>
        <end position="21"/>
    </location>
</feature>
<feature type="propeptide" id="PRO_0000404718" evidence="1">
    <location>
        <begin position="22"/>
        <end position="48"/>
    </location>
</feature>
<feature type="peptide" id="PRO_0000404719" description="Conotoxin ArMKLT2-0321">
    <location>
        <begin position="49"/>
        <end position="80"/>
    </location>
</feature>
<feature type="disulfide bond" evidence="1">
    <location>
        <begin position="50"/>
        <end position="63"/>
    </location>
</feature>
<feature type="disulfide bond" evidence="1">
    <location>
        <begin position="57"/>
        <end position="68"/>
    </location>
</feature>
<feature type="disulfide bond" evidence="1">
    <location>
        <begin position="62"/>
        <end position="77"/>
    </location>
</feature>
<name>O1611_CONAE</name>
<proteinExistence type="evidence at transcript level"/>
<comment type="subcellular location">
    <subcellularLocation>
        <location evidence="1">Secreted</location>
    </subcellularLocation>
</comment>
<comment type="tissue specificity">
    <text>Expressed by the venom duct.</text>
</comment>
<comment type="domain">
    <text evidence="1">The presence of a 'disulfide through disulfide knot' structurally defines this protein as a knottin.</text>
</comment>
<comment type="domain">
    <text>The cysteine framework is VI/VII (C-C-CC-C-C).</text>
</comment>
<comment type="similarity">
    <text evidence="3">Belongs to the conotoxin O1 superfamily.</text>
</comment>
<dbReference type="EMBL" id="AF215053">
    <property type="protein sequence ID" value="AAG60481.1"/>
    <property type="molecule type" value="mRNA"/>
</dbReference>
<dbReference type="SMR" id="Q9BP85"/>
<dbReference type="ConoServer" id="740">
    <property type="toxin name" value="Ar6.11 precursor"/>
</dbReference>
<dbReference type="GO" id="GO:0005576">
    <property type="term" value="C:extracellular region"/>
    <property type="evidence" value="ECO:0007669"/>
    <property type="project" value="UniProtKB-SubCell"/>
</dbReference>
<dbReference type="GO" id="GO:0008200">
    <property type="term" value="F:ion channel inhibitor activity"/>
    <property type="evidence" value="ECO:0007669"/>
    <property type="project" value="InterPro"/>
</dbReference>
<dbReference type="GO" id="GO:0090729">
    <property type="term" value="F:toxin activity"/>
    <property type="evidence" value="ECO:0007669"/>
    <property type="project" value="UniProtKB-KW"/>
</dbReference>
<dbReference type="InterPro" id="IPR004214">
    <property type="entry name" value="Conotoxin"/>
</dbReference>
<dbReference type="Pfam" id="PF02950">
    <property type="entry name" value="Conotoxin"/>
    <property type="match status" value="1"/>
</dbReference>
<organism>
    <name type="scientific">Conus arenatus</name>
    <name type="common">Sand-dusted cone</name>
    <dbReference type="NCBI Taxonomy" id="89451"/>
    <lineage>
        <taxon>Eukaryota</taxon>
        <taxon>Metazoa</taxon>
        <taxon>Spiralia</taxon>
        <taxon>Lophotrochozoa</taxon>
        <taxon>Mollusca</taxon>
        <taxon>Gastropoda</taxon>
        <taxon>Caenogastropoda</taxon>
        <taxon>Neogastropoda</taxon>
        <taxon>Conoidea</taxon>
        <taxon>Conidae</taxon>
        <taxon>Conus</taxon>
    </lineage>
</organism>